<name>MTL5_RAT</name>
<organism>
    <name type="scientific">Rattus norvegicus</name>
    <name type="common">Rat</name>
    <dbReference type="NCBI Taxonomy" id="10116"/>
    <lineage>
        <taxon>Eukaryota</taxon>
        <taxon>Metazoa</taxon>
        <taxon>Chordata</taxon>
        <taxon>Craniata</taxon>
        <taxon>Vertebrata</taxon>
        <taxon>Euteleostomi</taxon>
        <taxon>Mammalia</taxon>
        <taxon>Eutheria</taxon>
        <taxon>Euarchontoglires</taxon>
        <taxon>Glires</taxon>
        <taxon>Rodentia</taxon>
        <taxon>Myomorpha</taxon>
        <taxon>Muroidea</taxon>
        <taxon>Muridae</taxon>
        <taxon>Murinae</taxon>
        <taxon>Rattus</taxon>
    </lineage>
</organism>
<accession>Q5XHX9</accession>
<dbReference type="EMBL" id="BC083920">
    <property type="protein sequence ID" value="AAH83920.1"/>
    <property type="status" value="ALT_INIT"/>
    <property type="molecule type" value="mRNA"/>
</dbReference>
<dbReference type="RefSeq" id="NP_001012069.2">
    <property type="nucleotide sequence ID" value="NM_001012069.2"/>
</dbReference>
<dbReference type="SMR" id="Q5XHX9"/>
<dbReference type="FunCoup" id="Q5XHX9">
    <property type="interactions" value="57"/>
</dbReference>
<dbReference type="STRING" id="10116.ENSRNOP00000019861"/>
<dbReference type="iPTMnet" id="Q5XHX9"/>
<dbReference type="PhosphoSitePlus" id="Q5XHX9"/>
<dbReference type="PaxDb" id="10116-ENSRNOP00000019861"/>
<dbReference type="Ensembl" id="ENSRNOT00000019861.7">
    <property type="protein sequence ID" value="ENSRNOP00000019861.4"/>
    <property type="gene ID" value="ENSRNOG00000014671.7"/>
</dbReference>
<dbReference type="GeneID" id="309142"/>
<dbReference type="KEGG" id="rno:309142"/>
<dbReference type="UCSC" id="RGD:1309788">
    <property type="organism name" value="rat"/>
</dbReference>
<dbReference type="AGR" id="RGD:1309788"/>
<dbReference type="CTD" id="9633"/>
<dbReference type="RGD" id="1309788">
    <property type="gene designation" value="Tesmin"/>
</dbReference>
<dbReference type="eggNOG" id="KOG1171">
    <property type="taxonomic scope" value="Eukaryota"/>
</dbReference>
<dbReference type="GeneTree" id="ENSGT00940000161379"/>
<dbReference type="HOGENOM" id="CLU_025199_0_0_1"/>
<dbReference type="InParanoid" id="Q5XHX9"/>
<dbReference type="OMA" id="ILRIEFK"/>
<dbReference type="OrthoDB" id="6283463at2759"/>
<dbReference type="PhylomeDB" id="Q5XHX9"/>
<dbReference type="TreeFam" id="TF313189"/>
<dbReference type="PRO" id="PR:Q5XHX9"/>
<dbReference type="Proteomes" id="UP000002494">
    <property type="component" value="Chromosome 1"/>
</dbReference>
<dbReference type="Bgee" id="ENSRNOG00000014671">
    <property type="expression patterns" value="Expressed in testis and 1 other cell type or tissue"/>
</dbReference>
<dbReference type="GO" id="GO:0005737">
    <property type="term" value="C:cytoplasm"/>
    <property type="evidence" value="ECO:0000266"/>
    <property type="project" value="RGD"/>
</dbReference>
<dbReference type="GO" id="GO:0001673">
    <property type="term" value="C:male germ cell nucleus"/>
    <property type="evidence" value="ECO:0000266"/>
    <property type="project" value="RGD"/>
</dbReference>
<dbReference type="GO" id="GO:0005634">
    <property type="term" value="C:nucleus"/>
    <property type="evidence" value="ECO:0000318"/>
    <property type="project" value="GO_Central"/>
</dbReference>
<dbReference type="GO" id="GO:0030154">
    <property type="term" value="P:cell differentiation"/>
    <property type="evidence" value="ECO:0007669"/>
    <property type="project" value="UniProtKB-KW"/>
</dbReference>
<dbReference type="GO" id="GO:0007140">
    <property type="term" value="P:male meiotic nuclear division"/>
    <property type="evidence" value="ECO:0000266"/>
    <property type="project" value="RGD"/>
</dbReference>
<dbReference type="GO" id="GO:0006355">
    <property type="term" value="P:regulation of DNA-templated transcription"/>
    <property type="evidence" value="ECO:0000318"/>
    <property type="project" value="GO_Central"/>
</dbReference>
<dbReference type="GO" id="GO:0007283">
    <property type="term" value="P:spermatogenesis"/>
    <property type="evidence" value="ECO:0000266"/>
    <property type="project" value="RGD"/>
</dbReference>
<dbReference type="InterPro" id="IPR005172">
    <property type="entry name" value="CRC"/>
</dbReference>
<dbReference type="InterPro" id="IPR028307">
    <property type="entry name" value="Lin-54_fam"/>
</dbReference>
<dbReference type="InterPro" id="IPR033467">
    <property type="entry name" value="Tesmin/TSO1-like_CXC"/>
</dbReference>
<dbReference type="PANTHER" id="PTHR12446:SF22">
    <property type="entry name" value="TESMIN"/>
    <property type="match status" value="1"/>
</dbReference>
<dbReference type="PANTHER" id="PTHR12446">
    <property type="entry name" value="TESMIN/TSO1-RELATED"/>
    <property type="match status" value="1"/>
</dbReference>
<dbReference type="Pfam" id="PF03638">
    <property type="entry name" value="TCR"/>
    <property type="match status" value="1"/>
</dbReference>
<dbReference type="SMART" id="SM01114">
    <property type="entry name" value="CXC"/>
    <property type="match status" value="1"/>
</dbReference>
<dbReference type="PROSITE" id="PS51634">
    <property type="entry name" value="CRC"/>
    <property type="match status" value="1"/>
</dbReference>
<sequence>MEDALLGAMTGPEDELGAELFGSERAFADGLALSPAGGAADRDELPVLADAYLGATEPGEPLLRALSPPPGAEVPAALLGDFPGLPELRSSDDAAPPPAYSVHVLSSLLPGARGPALLPLSAGVRVIPVEIKEAGGGVPGSSPEDAAFQAPLAQESCCKFSSSQEAEEASGCPRKKDSSPMVICQLKGGAQMLCIDNCGARELKALHLLPQYDDQSSFPQSELPKPMTTLVGRLLPVPAKLNLITQVDNGALPSAVNGAAFPSGPALQGPPKIALAGYCDCFSSGDFCNSCSCNNLRHELERFKAIKACLDRNPEAFQPKMGKGRLGAAKLRHSKGCNCKRSGCLKNYCECYEAKITCSSICKCIACKNYEESPERKMLMSTPHYMEPGDFESSHHLSPAKFSGPPRLRKNRQAFSCISWEVVEATCACLLAQGEEAEQERCSPSLAEQMVLEEFGRCLSQILHIEFKSKGLKIE</sequence>
<gene>
    <name evidence="4" type="primary">Tesmin</name>
    <name type="synonym">Mtl5</name>
</gene>
<feature type="chain" id="PRO_0000349273" description="Tesmin">
    <location>
        <begin position="1"/>
        <end position="475"/>
    </location>
</feature>
<feature type="domain" description="CRC" evidence="2">
    <location>
        <begin position="263"/>
        <end position="372"/>
    </location>
</feature>
<feature type="modified residue" description="Phosphoserine" evidence="5">
    <location>
        <position position="34"/>
    </location>
</feature>
<feature type="modified residue" description="Phosphoserine" evidence="5">
    <location>
        <position position="67"/>
    </location>
</feature>
<evidence type="ECO:0000250" key="1">
    <source>
        <dbReference type="UniProtKB" id="Q9WTJ6"/>
    </source>
</evidence>
<evidence type="ECO:0000255" key="2">
    <source>
        <dbReference type="PROSITE-ProRule" id="PRU00971"/>
    </source>
</evidence>
<evidence type="ECO:0000305" key="3"/>
<evidence type="ECO:0000312" key="4">
    <source>
        <dbReference type="RGD" id="1309788"/>
    </source>
</evidence>
<evidence type="ECO:0007744" key="5">
    <source>
    </source>
</evidence>
<protein>
    <recommendedName>
        <fullName>Tesmin</fullName>
    </recommendedName>
    <alternativeName>
        <fullName>Metallothionein-like 5, testis-specific</fullName>
    </alternativeName>
</protein>
<keyword id="KW-0963">Cytoplasm</keyword>
<keyword id="KW-0217">Developmental protein</keyword>
<keyword id="KW-0221">Differentiation</keyword>
<keyword id="KW-0539">Nucleus</keyword>
<keyword id="KW-0597">Phosphoprotein</keyword>
<keyword id="KW-1185">Reference proteome</keyword>
<keyword id="KW-0744">Spermatogenesis</keyword>
<comment type="function">
    <text evidence="3">May have a role in spermatogenesis.</text>
</comment>
<comment type="subcellular location">
    <subcellularLocation>
        <location evidence="1">Cytoplasm</location>
    </subcellularLocation>
    <subcellularLocation>
        <location evidence="1">Nucleus</location>
    </subcellularLocation>
    <text evidence="1">Predominantly localized to the cytoplasm. Translocates from the cytoplasm to the nucleus in the G2/M transition upon treatment with cadmium, cobalt or zinc.</text>
</comment>
<comment type="similarity">
    <text evidence="3">Belongs to the lin-54 family.</text>
</comment>
<comment type="sequence caution" evidence="3">
    <conflict type="erroneous initiation">
        <sequence resource="EMBL-CDS" id="AAH83920"/>
    </conflict>
</comment>
<proteinExistence type="evidence at protein level"/>
<reference key="1">
    <citation type="journal article" date="2004" name="Genome Res.">
        <title>The status, quality, and expansion of the NIH full-length cDNA project: the Mammalian Gene Collection (MGC).</title>
        <authorList>
            <consortium name="The MGC Project Team"/>
        </authorList>
    </citation>
    <scope>NUCLEOTIDE SEQUENCE [LARGE SCALE MRNA]</scope>
    <source>
        <tissue>Testis</tissue>
    </source>
</reference>
<reference key="2">
    <citation type="journal article" date="2012" name="Nat. Commun.">
        <title>Quantitative maps of protein phosphorylation sites across 14 different rat organs and tissues.</title>
        <authorList>
            <person name="Lundby A."/>
            <person name="Secher A."/>
            <person name="Lage K."/>
            <person name="Nordsborg N.B."/>
            <person name="Dmytriyev A."/>
            <person name="Lundby C."/>
            <person name="Olsen J.V."/>
        </authorList>
    </citation>
    <scope>PHOSPHORYLATION [LARGE SCALE ANALYSIS] AT SER-34 AND SER-67</scope>
    <scope>IDENTIFICATION BY MASS SPECTROMETRY [LARGE SCALE ANALYSIS]</scope>
</reference>